<proteinExistence type="inferred from homology"/>
<keyword id="KW-0269">Exonuclease</keyword>
<keyword id="KW-0378">Hydrolase</keyword>
<keyword id="KW-0540">Nuclease</keyword>
<reference key="1">
    <citation type="journal article" date="2006" name="J. Bacteriol.">
        <title>Whole-genome sequence of Listeria welshimeri reveals common steps in genome reduction with Listeria innocua as compared to Listeria monocytogenes.</title>
        <authorList>
            <person name="Hain T."/>
            <person name="Steinweg C."/>
            <person name="Kuenne C.T."/>
            <person name="Billion A."/>
            <person name="Ghai R."/>
            <person name="Chatterjee S.S."/>
            <person name="Domann E."/>
            <person name="Kaerst U."/>
            <person name="Goesmann A."/>
            <person name="Bekel T."/>
            <person name="Bartels D."/>
            <person name="Kaiser O."/>
            <person name="Meyer F."/>
            <person name="Puehler A."/>
            <person name="Weisshaar B."/>
            <person name="Wehland J."/>
            <person name="Liang C."/>
            <person name="Dandekar T."/>
            <person name="Lampidis R."/>
            <person name="Kreft J."/>
            <person name="Goebel W."/>
            <person name="Chakraborty T."/>
        </authorList>
    </citation>
    <scope>NUCLEOTIDE SEQUENCE [LARGE SCALE GENOMIC DNA]</scope>
    <source>
        <strain>ATCC 35897 / DSM 20650 / CCUG 15529 / CIP 8149 / NCTC 11857 / SLCC 5334 / V8</strain>
    </source>
</reference>
<comment type="function">
    <text evidence="1">Shows a 3'-5' exoribonuclease activity.</text>
</comment>
<comment type="similarity">
    <text evidence="1">Belongs to the YhaM family.</text>
</comment>
<accession>A0AKX3</accession>
<sequence length="313" mass="35520">MEKRLLDFEVGETVELFLLIKSSIKGTASNGKPFLSLVLQDKSGELEAKLWDVKESDEVNYGVQQIVHLIGDIQNYRGRKQLKIRQIRQATPLDGVNASEFMETAPINKEEMADEITQYIFEMKNANLQRITRALLKKYQDDFYDYPAAMRHHHEFVSGLSFHVVSMLRLAKAVSDLYPTVNRDLLYAGVILHDLGKVIELSGPVSTTYTLEGNLIGHISIVVEEVSKIADELSIDDEEVVVLKHVLLSHHGKGEWGSPKPPLVREAEILHQIDLMDASINMMDKVLKHTKPGEFSERVFGLDNRSFYNPTFE</sequence>
<gene>
    <name evidence="1" type="primary">yhaM</name>
    <name type="ordered locus">lwe2237</name>
</gene>
<evidence type="ECO:0000255" key="1">
    <source>
        <dbReference type="HAMAP-Rule" id="MF_01427"/>
    </source>
</evidence>
<evidence type="ECO:0000255" key="2">
    <source>
        <dbReference type="PROSITE-ProRule" id="PRU01175"/>
    </source>
</evidence>
<feature type="chain" id="PRO_1000024349" description="3'-5' exoribonuclease YhaM">
    <location>
        <begin position="1"/>
        <end position="313"/>
    </location>
</feature>
<feature type="domain" description="HD" evidence="2">
    <location>
        <begin position="163"/>
        <end position="279"/>
    </location>
</feature>
<dbReference type="EC" id="3.1.-.-" evidence="1"/>
<dbReference type="EMBL" id="AM263198">
    <property type="protein sequence ID" value="CAK21655.1"/>
    <property type="molecule type" value="Genomic_DNA"/>
</dbReference>
<dbReference type="RefSeq" id="WP_011702988.1">
    <property type="nucleotide sequence ID" value="NC_008555.1"/>
</dbReference>
<dbReference type="SMR" id="A0AKX3"/>
<dbReference type="STRING" id="386043.lwe2237"/>
<dbReference type="GeneID" id="61190140"/>
<dbReference type="KEGG" id="lwe:lwe2237"/>
<dbReference type="eggNOG" id="COG3481">
    <property type="taxonomic scope" value="Bacteria"/>
</dbReference>
<dbReference type="HOGENOM" id="CLU_056349_2_0_9"/>
<dbReference type="OrthoDB" id="9778453at2"/>
<dbReference type="Proteomes" id="UP000000779">
    <property type="component" value="Chromosome"/>
</dbReference>
<dbReference type="GO" id="GO:0000175">
    <property type="term" value="F:3'-5'-RNA exonuclease activity"/>
    <property type="evidence" value="ECO:0007669"/>
    <property type="project" value="UniProtKB-UniRule"/>
</dbReference>
<dbReference type="GO" id="GO:0031125">
    <property type="term" value="P:rRNA 3'-end processing"/>
    <property type="evidence" value="ECO:0007669"/>
    <property type="project" value="TreeGrafter"/>
</dbReference>
<dbReference type="CDD" id="cd00077">
    <property type="entry name" value="HDc"/>
    <property type="match status" value="1"/>
</dbReference>
<dbReference type="CDD" id="cd04492">
    <property type="entry name" value="YhaM_OBF_like"/>
    <property type="match status" value="1"/>
</dbReference>
<dbReference type="FunFam" id="1.10.3210.10:FF:000008">
    <property type="entry name" value="3'-5' exoribonuclease YhaM"/>
    <property type="match status" value="1"/>
</dbReference>
<dbReference type="Gene3D" id="1.10.3210.10">
    <property type="entry name" value="Hypothetical protein af1432"/>
    <property type="match status" value="1"/>
</dbReference>
<dbReference type="Gene3D" id="2.40.50.140">
    <property type="entry name" value="Nucleic acid-binding proteins"/>
    <property type="match status" value="1"/>
</dbReference>
<dbReference type="HAMAP" id="MF_01427">
    <property type="entry name" value="3_5_Exoribonuc_YhaM"/>
    <property type="match status" value="1"/>
</dbReference>
<dbReference type="InterPro" id="IPR020873">
    <property type="entry name" value="3'-5'_exoribonuclease_YhaM"/>
</dbReference>
<dbReference type="InterPro" id="IPR003607">
    <property type="entry name" value="HD/PDEase_dom"/>
</dbReference>
<dbReference type="InterPro" id="IPR006674">
    <property type="entry name" value="HD_domain"/>
</dbReference>
<dbReference type="InterPro" id="IPR012340">
    <property type="entry name" value="NA-bd_OB-fold"/>
</dbReference>
<dbReference type="InterPro" id="IPR050798">
    <property type="entry name" value="YhaM_exoribonuc/phosphodiest"/>
</dbReference>
<dbReference type="NCBIfam" id="NF010007">
    <property type="entry name" value="PRK13480.1"/>
    <property type="match status" value="1"/>
</dbReference>
<dbReference type="PANTHER" id="PTHR37294">
    <property type="entry name" value="3'-5' EXORIBONUCLEASE YHAM"/>
    <property type="match status" value="1"/>
</dbReference>
<dbReference type="PANTHER" id="PTHR37294:SF1">
    <property type="entry name" value="3'-5' EXORIBONUCLEASE YHAM"/>
    <property type="match status" value="1"/>
</dbReference>
<dbReference type="Pfam" id="PF01966">
    <property type="entry name" value="HD"/>
    <property type="match status" value="1"/>
</dbReference>
<dbReference type="SUPFAM" id="SSF109604">
    <property type="entry name" value="HD-domain/PDEase-like"/>
    <property type="match status" value="1"/>
</dbReference>
<dbReference type="PROSITE" id="PS51831">
    <property type="entry name" value="HD"/>
    <property type="match status" value="1"/>
</dbReference>
<organism>
    <name type="scientific">Listeria welshimeri serovar 6b (strain ATCC 35897 / DSM 20650 / CCUG 15529 / CIP 8149 / NCTC 11857 / SLCC 5334 / V8)</name>
    <dbReference type="NCBI Taxonomy" id="386043"/>
    <lineage>
        <taxon>Bacteria</taxon>
        <taxon>Bacillati</taxon>
        <taxon>Bacillota</taxon>
        <taxon>Bacilli</taxon>
        <taxon>Bacillales</taxon>
        <taxon>Listeriaceae</taxon>
        <taxon>Listeria</taxon>
    </lineage>
</organism>
<name>YHAM_LISW6</name>
<protein>
    <recommendedName>
        <fullName evidence="1">3'-5' exoribonuclease YhaM</fullName>
        <ecNumber evidence="1">3.1.-.-</ecNumber>
    </recommendedName>
</protein>